<comment type="function">
    <text evidence="1">This b-type cytochrome is tightly associated with the reaction center of photosystem II (PSII). PSII is a light-driven water:plastoquinone oxidoreductase that uses light energy to abstract electrons from H(2)O, generating O(2) and a proton gradient subsequently used for ATP formation. It consists of a core antenna complex that captures photons, and an electron transfer chain that converts photonic excitation into a charge separation.</text>
</comment>
<comment type="cofactor">
    <cofactor evidence="1">
        <name>heme b</name>
        <dbReference type="ChEBI" id="CHEBI:60344"/>
    </cofactor>
    <text evidence="1">With its partner (PsbE) binds heme. PSII binds additional chlorophylls, carotenoids and specific lipids.</text>
</comment>
<comment type="subunit">
    <text evidence="1">Heterodimer of an alpha subunit and a beta subunit. PSII is composed of 1 copy each of membrane proteins PsbA, PsbB, PsbC, PsbD, PsbE, PsbF, PsbH, PsbI, PsbJ, PsbK, PsbL, PsbM, PsbT, PsbX, PsbY, PsbZ, Psb30/Ycf12, at least 3 peripheral proteins of the oxygen-evolving complex and a large number of cofactors. It forms dimeric complexes.</text>
</comment>
<comment type="subcellular location">
    <subcellularLocation>
        <location evidence="1">Plastid</location>
        <location evidence="1">Chloroplast thylakoid membrane</location>
        <topology evidence="1">Single-pass membrane protein</topology>
    </subcellularLocation>
</comment>
<comment type="similarity">
    <text evidence="1">Belongs to the PsbE/PsbF family.</text>
</comment>
<feature type="chain" id="PRO_0000275731" description="Cytochrome b559 subunit beta">
    <location>
        <begin position="1"/>
        <end position="39"/>
    </location>
</feature>
<feature type="transmembrane region" description="Helical" evidence="1">
    <location>
        <begin position="14"/>
        <end position="30"/>
    </location>
</feature>
<feature type="binding site" description="axial binding residue" evidence="1">
    <location>
        <position position="18"/>
    </location>
    <ligand>
        <name>heme</name>
        <dbReference type="ChEBI" id="CHEBI:30413"/>
        <note>ligand shared with alpha subunit</note>
    </ligand>
    <ligandPart>
        <name>Fe</name>
        <dbReference type="ChEBI" id="CHEBI:18248"/>
    </ligandPart>
</feature>
<protein>
    <recommendedName>
        <fullName evidence="1">Cytochrome b559 subunit beta</fullName>
    </recommendedName>
    <alternativeName>
        <fullName evidence="1">PSII reaction center subunit VI</fullName>
    </alternativeName>
</protein>
<name>PSBF_HELAN</name>
<geneLocation type="chloroplast"/>
<dbReference type="EMBL" id="DQ383815">
    <property type="protein sequence ID" value="ABD47162.1"/>
    <property type="molecule type" value="Genomic_DNA"/>
</dbReference>
<dbReference type="RefSeq" id="YP_588133.1">
    <property type="nucleotide sequence ID" value="NC_007977.1"/>
</dbReference>
<dbReference type="SMR" id="Q1KXU3"/>
<dbReference type="GeneID" id="4055670"/>
<dbReference type="KEGG" id="han:4055670"/>
<dbReference type="OrthoDB" id="77at2759"/>
<dbReference type="GO" id="GO:0009535">
    <property type="term" value="C:chloroplast thylakoid membrane"/>
    <property type="evidence" value="ECO:0007669"/>
    <property type="project" value="UniProtKB-SubCell"/>
</dbReference>
<dbReference type="GO" id="GO:0009539">
    <property type="term" value="C:photosystem II reaction center"/>
    <property type="evidence" value="ECO:0007669"/>
    <property type="project" value="InterPro"/>
</dbReference>
<dbReference type="GO" id="GO:0009055">
    <property type="term" value="F:electron transfer activity"/>
    <property type="evidence" value="ECO:0007669"/>
    <property type="project" value="UniProtKB-UniRule"/>
</dbReference>
<dbReference type="GO" id="GO:0020037">
    <property type="term" value="F:heme binding"/>
    <property type="evidence" value="ECO:0007669"/>
    <property type="project" value="InterPro"/>
</dbReference>
<dbReference type="GO" id="GO:0005506">
    <property type="term" value="F:iron ion binding"/>
    <property type="evidence" value="ECO:0007669"/>
    <property type="project" value="UniProtKB-UniRule"/>
</dbReference>
<dbReference type="GO" id="GO:0009767">
    <property type="term" value="P:photosynthetic electron transport chain"/>
    <property type="evidence" value="ECO:0007669"/>
    <property type="project" value="InterPro"/>
</dbReference>
<dbReference type="HAMAP" id="MF_00643">
    <property type="entry name" value="PSII_PsbF"/>
    <property type="match status" value="1"/>
</dbReference>
<dbReference type="InterPro" id="IPR006241">
    <property type="entry name" value="PSII_cyt_b559_bsu"/>
</dbReference>
<dbReference type="InterPro" id="IPR006216">
    <property type="entry name" value="PSII_cyt_b559_CS"/>
</dbReference>
<dbReference type="InterPro" id="IPR013081">
    <property type="entry name" value="PSII_cyt_b559_N"/>
</dbReference>
<dbReference type="NCBIfam" id="TIGR01333">
    <property type="entry name" value="cyt_b559_beta"/>
    <property type="match status" value="1"/>
</dbReference>
<dbReference type="Pfam" id="PF00283">
    <property type="entry name" value="Cytochrom_B559"/>
    <property type="match status" value="1"/>
</dbReference>
<dbReference type="PIRSF" id="PIRSF000037">
    <property type="entry name" value="PsbF"/>
    <property type="match status" value="1"/>
</dbReference>
<dbReference type="SUPFAM" id="SSF161045">
    <property type="entry name" value="Cytochrome b559 subunits"/>
    <property type="match status" value="1"/>
</dbReference>
<dbReference type="PROSITE" id="PS00537">
    <property type="entry name" value="CYTOCHROME_B559"/>
    <property type="match status" value="1"/>
</dbReference>
<sequence length="39" mass="4424">MTIDRTYPIFTVRWLAVHGLAVPTVSFLGSISAMQFIQR</sequence>
<accession>Q1KXU3</accession>
<proteinExistence type="inferred from homology"/>
<reference key="1">
    <citation type="submission" date="2006-01" db="EMBL/GenBank/DDBJ databases">
        <title>A comparison of the first two published chloroplast genomes in Asteraceae: Lactuca and Helianthus.</title>
        <authorList>
            <person name="Timme R.E."/>
            <person name="Kuehl J.V."/>
            <person name="Boore J.L."/>
            <person name="Jansen R.K."/>
        </authorList>
    </citation>
    <scope>NUCLEOTIDE SEQUENCE [LARGE SCALE GENOMIC DNA]</scope>
    <source>
        <strain>cv. HA383</strain>
    </source>
</reference>
<organism>
    <name type="scientific">Helianthus annuus</name>
    <name type="common">Common sunflower</name>
    <dbReference type="NCBI Taxonomy" id="4232"/>
    <lineage>
        <taxon>Eukaryota</taxon>
        <taxon>Viridiplantae</taxon>
        <taxon>Streptophyta</taxon>
        <taxon>Embryophyta</taxon>
        <taxon>Tracheophyta</taxon>
        <taxon>Spermatophyta</taxon>
        <taxon>Magnoliopsida</taxon>
        <taxon>eudicotyledons</taxon>
        <taxon>Gunneridae</taxon>
        <taxon>Pentapetalae</taxon>
        <taxon>asterids</taxon>
        <taxon>campanulids</taxon>
        <taxon>Asterales</taxon>
        <taxon>Asteraceae</taxon>
        <taxon>Asteroideae</taxon>
        <taxon>Heliantheae alliance</taxon>
        <taxon>Heliantheae</taxon>
        <taxon>Helianthus</taxon>
    </lineage>
</organism>
<evidence type="ECO:0000255" key="1">
    <source>
        <dbReference type="HAMAP-Rule" id="MF_00643"/>
    </source>
</evidence>
<keyword id="KW-0150">Chloroplast</keyword>
<keyword id="KW-0249">Electron transport</keyword>
<keyword id="KW-0349">Heme</keyword>
<keyword id="KW-0408">Iron</keyword>
<keyword id="KW-0472">Membrane</keyword>
<keyword id="KW-0479">Metal-binding</keyword>
<keyword id="KW-0602">Photosynthesis</keyword>
<keyword id="KW-0604">Photosystem II</keyword>
<keyword id="KW-0934">Plastid</keyword>
<keyword id="KW-0793">Thylakoid</keyword>
<keyword id="KW-0812">Transmembrane</keyword>
<keyword id="KW-1133">Transmembrane helix</keyword>
<keyword id="KW-0813">Transport</keyword>
<gene>
    <name evidence="1" type="primary">psbF</name>
</gene>